<sequence>MHFETVIGLEVHVELKTDSKMFSPSPAHFGAEPNSNTNVIDLAYPGVLPVVNKRAVDWAMRAAMALNMEIATESKFDRKNYFYPDNPKAYQISQFDQPIGENGYIDIEVDGETKRIGITRLHMEEDAGKSTHKGEYSLVDLNRQGTPLIEIVSEPDIRSPKEAYAYLEKLRSIIQYTGVSDVKMEEGSLRCDANISLRPYGQEKFGTKAELKNLNSFNYVRKGLEYEEKRQEEELLNGGEIGQETRRFDESTGKTILMRVKEGSDDYRYFPEPDIVPLYIDDAWKERVRQTIPELPDERKAKYVNELGLPAYDAHVLTLTKEMSDFFESTIEHGADVKLTSNWLMGGVNEYLNKNQVELLDTKLTPENLAGMIKLIEDGTMSSKIAKKVFPELAAKGGNAKQIMEDNGLVQISDEATLLKFVNEALDNNEQSVEDYKNGKGKAMGFLVGQIMKASKGQANPQLVNQLLKQELDKR</sequence>
<reference key="1">
    <citation type="journal article" date="2001" name="Lancet">
        <title>Whole genome sequencing of meticillin-resistant Staphylococcus aureus.</title>
        <authorList>
            <person name="Kuroda M."/>
            <person name="Ohta T."/>
            <person name="Uchiyama I."/>
            <person name="Baba T."/>
            <person name="Yuzawa H."/>
            <person name="Kobayashi I."/>
            <person name="Cui L."/>
            <person name="Oguchi A."/>
            <person name="Aoki K."/>
            <person name="Nagai Y."/>
            <person name="Lian J.-Q."/>
            <person name="Ito T."/>
            <person name="Kanamori M."/>
            <person name="Matsumaru H."/>
            <person name="Maruyama A."/>
            <person name="Murakami H."/>
            <person name="Hosoyama A."/>
            <person name="Mizutani-Ui Y."/>
            <person name="Takahashi N.K."/>
            <person name="Sawano T."/>
            <person name="Inoue R."/>
            <person name="Kaito C."/>
            <person name="Sekimizu K."/>
            <person name="Hirakawa H."/>
            <person name="Kuhara S."/>
            <person name="Goto S."/>
            <person name="Yabuzaki J."/>
            <person name="Kanehisa M."/>
            <person name="Yamashita A."/>
            <person name="Oshima K."/>
            <person name="Furuya K."/>
            <person name="Yoshino C."/>
            <person name="Shiba T."/>
            <person name="Hattori M."/>
            <person name="Ogasawara N."/>
            <person name="Hayashi H."/>
            <person name="Hiramatsu K."/>
        </authorList>
    </citation>
    <scope>NUCLEOTIDE SEQUENCE [LARGE SCALE GENOMIC DNA]</scope>
    <source>
        <strain>N315</strain>
    </source>
</reference>
<reference key="2">
    <citation type="journal article" date="2005" name="J. Microbiol. Methods">
        <title>Correlation of proteomic and transcriptomic profiles of Staphylococcus aureus during the post-exponential phase of growth.</title>
        <authorList>
            <person name="Scherl A."/>
            <person name="Francois P."/>
            <person name="Bento M."/>
            <person name="Deshusses J.M."/>
            <person name="Charbonnier Y."/>
            <person name="Converset V."/>
            <person name="Huyghe A."/>
            <person name="Walter N."/>
            <person name="Hoogland C."/>
            <person name="Appel R.D."/>
            <person name="Sanchez J.-C."/>
            <person name="Zimmermann-Ivol C.G."/>
            <person name="Corthals G.L."/>
            <person name="Hochstrasser D.F."/>
            <person name="Schrenzel J."/>
        </authorList>
    </citation>
    <scope>IDENTIFICATION BY MASS SPECTROMETRY</scope>
    <source>
        <strain>N315</strain>
    </source>
</reference>
<reference key="3">
    <citation type="submission" date="2007-10" db="UniProtKB">
        <title>Shotgun proteomic analysis of total and membrane protein extracts of S. aureus strain N315.</title>
        <authorList>
            <person name="Vaezzadeh A.R."/>
            <person name="Deshusses J."/>
            <person name="Lescuyer P."/>
            <person name="Hochstrasser D.F."/>
        </authorList>
    </citation>
    <scope>IDENTIFICATION BY MASS SPECTROMETRY [LARGE SCALE ANALYSIS]</scope>
    <source>
        <strain>N315</strain>
    </source>
</reference>
<accession>P99169</accession>
<accession>Q99SY7</accession>
<gene>
    <name evidence="1" type="primary">gatB</name>
    <name type="ordered locus">SA1715</name>
</gene>
<comment type="function">
    <text evidence="1">Allows the formation of correctly charged Asn-tRNA(Asn) or Gln-tRNA(Gln) through the transamidation of misacylated Asp-tRNA(Asn) or Glu-tRNA(Gln) in organisms which lack either or both of asparaginyl-tRNA or glutaminyl-tRNA synthetases. The reaction takes place in the presence of glutamine and ATP through an activated phospho-Asp-tRNA(Asn) or phospho-Glu-tRNA(Gln).</text>
</comment>
<comment type="catalytic activity">
    <reaction evidence="1">
        <text>L-glutamyl-tRNA(Gln) + L-glutamine + ATP + H2O = L-glutaminyl-tRNA(Gln) + L-glutamate + ADP + phosphate + H(+)</text>
        <dbReference type="Rhea" id="RHEA:17521"/>
        <dbReference type="Rhea" id="RHEA-COMP:9681"/>
        <dbReference type="Rhea" id="RHEA-COMP:9684"/>
        <dbReference type="ChEBI" id="CHEBI:15377"/>
        <dbReference type="ChEBI" id="CHEBI:15378"/>
        <dbReference type="ChEBI" id="CHEBI:29985"/>
        <dbReference type="ChEBI" id="CHEBI:30616"/>
        <dbReference type="ChEBI" id="CHEBI:43474"/>
        <dbReference type="ChEBI" id="CHEBI:58359"/>
        <dbReference type="ChEBI" id="CHEBI:78520"/>
        <dbReference type="ChEBI" id="CHEBI:78521"/>
        <dbReference type="ChEBI" id="CHEBI:456216"/>
    </reaction>
</comment>
<comment type="catalytic activity">
    <reaction evidence="1">
        <text>L-aspartyl-tRNA(Asn) + L-glutamine + ATP + H2O = L-asparaginyl-tRNA(Asn) + L-glutamate + ADP + phosphate + 2 H(+)</text>
        <dbReference type="Rhea" id="RHEA:14513"/>
        <dbReference type="Rhea" id="RHEA-COMP:9674"/>
        <dbReference type="Rhea" id="RHEA-COMP:9677"/>
        <dbReference type="ChEBI" id="CHEBI:15377"/>
        <dbReference type="ChEBI" id="CHEBI:15378"/>
        <dbReference type="ChEBI" id="CHEBI:29985"/>
        <dbReference type="ChEBI" id="CHEBI:30616"/>
        <dbReference type="ChEBI" id="CHEBI:43474"/>
        <dbReference type="ChEBI" id="CHEBI:58359"/>
        <dbReference type="ChEBI" id="CHEBI:78515"/>
        <dbReference type="ChEBI" id="CHEBI:78516"/>
        <dbReference type="ChEBI" id="CHEBI:456216"/>
    </reaction>
</comment>
<comment type="subunit">
    <text evidence="1">Heterotrimer of A, B and C subunits.</text>
</comment>
<comment type="similarity">
    <text evidence="1">Belongs to the GatB/GatE family. GatB subfamily.</text>
</comment>
<keyword id="KW-0067">ATP-binding</keyword>
<keyword id="KW-0436">Ligase</keyword>
<keyword id="KW-0547">Nucleotide-binding</keyword>
<keyword id="KW-0648">Protein biosynthesis</keyword>
<organism>
    <name type="scientific">Staphylococcus aureus (strain N315)</name>
    <dbReference type="NCBI Taxonomy" id="158879"/>
    <lineage>
        <taxon>Bacteria</taxon>
        <taxon>Bacillati</taxon>
        <taxon>Bacillota</taxon>
        <taxon>Bacilli</taxon>
        <taxon>Bacillales</taxon>
        <taxon>Staphylococcaceae</taxon>
        <taxon>Staphylococcus</taxon>
    </lineage>
</organism>
<protein>
    <recommendedName>
        <fullName evidence="1">Aspartyl/glutamyl-tRNA(Asn/Gln) amidotransferase subunit B</fullName>
        <shortName evidence="1">Asp/Glu-ADT subunit B</shortName>
        <ecNumber evidence="1">6.3.5.-</ecNumber>
    </recommendedName>
</protein>
<evidence type="ECO:0000255" key="1">
    <source>
        <dbReference type="HAMAP-Rule" id="MF_00121"/>
    </source>
</evidence>
<name>GATB_STAAN</name>
<feature type="chain" id="PRO_0000148835" description="Aspartyl/glutamyl-tRNA(Asn/Gln) amidotransferase subunit B">
    <location>
        <begin position="1"/>
        <end position="475"/>
    </location>
</feature>
<proteinExistence type="evidence at protein level"/>
<dbReference type="EC" id="6.3.5.-" evidence="1"/>
<dbReference type="EMBL" id="BA000018">
    <property type="protein sequence ID" value="BAB42985.1"/>
    <property type="molecule type" value="Genomic_DNA"/>
</dbReference>
<dbReference type="PIR" id="B89978">
    <property type="entry name" value="B89978"/>
</dbReference>
<dbReference type="RefSeq" id="WP_000545370.1">
    <property type="nucleotide sequence ID" value="NC_002745.2"/>
</dbReference>
<dbReference type="SMR" id="P99169"/>
<dbReference type="EnsemblBacteria" id="BAB42985">
    <property type="protein sequence ID" value="BAB42985"/>
    <property type="gene ID" value="BAB42985"/>
</dbReference>
<dbReference type="KEGG" id="sau:SA1715"/>
<dbReference type="HOGENOM" id="CLU_019240_0_0_9"/>
<dbReference type="GO" id="GO:0050566">
    <property type="term" value="F:asparaginyl-tRNA synthase (glutamine-hydrolyzing) activity"/>
    <property type="evidence" value="ECO:0007669"/>
    <property type="project" value="RHEA"/>
</dbReference>
<dbReference type="GO" id="GO:0005524">
    <property type="term" value="F:ATP binding"/>
    <property type="evidence" value="ECO:0007669"/>
    <property type="project" value="UniProtKB-KW"/>
</dbReference>
<dbReference type="GO" id="GO:0050567">
    <property type="term" value="F:glutaminyl-tRNA synthase (glutamine-hydrolyzing) activity"/>
    <property type="evidence" value="ECO:0007669"/>
    <property type="project" value="UniProtKB-UniRule"/>
</dbReference>
<dbReference type="GO" id="GO:0070681">
    <property type="term" value="P:glutaminyl-tRNAGln biosynthesis via transamidation"/>
    <property type="evidence" value="ECO:0007669"/>
    <property type="project" value="TreeGrafter"/>
</dbReference>
<dbReference type="GO" id="GO:0006412">
    <property type="term" value="P:translation"/>
    <property type="evidence" value="ECO:0007669"/>
    <property type="project" value="UniProtKB-UniRule"/>
</dbReference>
<dbReference type="FunFam" id="1.10.10.410:FF:000001">
    <property type="entry name" value="Aspartyl/glutamyl-tRNA(Asn/Gln) amidotransferase subunit B"/>
    <property type="match status" value="1"/>
</dbReference>
<dbReference type="FunFam" id="1.10.150.380:FF:000001">
    <property type="entry name" value="Aspartyl/glutamyl-tRNA(Asn/Gln) amidotransferase subunit B"/>
    <property type="match status" value="1"/>
</dbReference>
<dbReference type="Gene3D" id="1.10.10.410">
    <property type="match status" value="1"/>
</dbReference>
<dbReference type="Gene3D" id="1.10.150.380">
    <property type="entry name" value="GatB domain, N-terminal subdomain"/>
    <property type="match status" value="1"/>
</dbReference>
<dbReference type="HAMAP" id="MF_00121">
    <property type="entry name" value="GatB"/>
    <property type="match status" value="1"/>
</dbReference>
<dbReference type="InterPro" id="IPR017959">
    <property type="entry name" value="Asn/Gln-tRNA_amidoTrfase_suB/E"/>
</dbReference>
<dbReference type="InterPro" id="IPR006075">
    <property type="entry name" value="Asn/Gln-tRNA_Trfase_suB/E_cat"/>
</dbReference>
<dbReference type="InterPro" id="IPR018027">
    <property type="entry name" value="Asn/Gln_amidotransferase"/>
</dbReference>
<dbReference type="InterPro" id="IPR003789">
    <property type="entry name" value="Asn/Gln_tRNA_amidoTrase-B-like"/>
</dbReference>
<dbReference type="InterPro" id="IPR004413">
    <property type="entry name" value="GatB"/>
</dbReference>
<dbReference type="InterPro" id="IPR042114">
    <property type="entry name" value="GatB_C_1"/>
</dbReference>
<dbReference type="InterPro" id="IPR023168">
    <property type="entry name" value="GatB_Yqey_C_2"/>
</dbReference>
<dbReference type="InterPro" id="IPR017958">
    <property type="entry name" value="Gln-tRNA_amidoTrfase_suB_CS"/>
</dbReference>
<dbReference type="InterPro" id="IPR014746">
    <property type="entry name" value="Gln_synth/guanido_kin_cat_dom"/>
</dbReference>
<dbReference type="NCBIfam" id="TIGR00133">
    <property type="entry name" value="gatB"/>
    <property type="match status" value="1"/>
</dbReference>
<dbReference type="NCBIfam" id="NF004011">
    <property type="entry name" value="PRK05477.1-1"/>
    <property type="match status" value="1"/>
</dbReference>
<dbReference type="NCBIfam" id="NF004012">
    <property type="entry name" value="PRK05477.1-2"/>
    <property type="match status" value="1"/>
</dbReference>
<dbReference type="NCBIfam" id="NF004014">
    <property type="entry name" value="PRK05477.1-4"/>
    <property type="match status" value="1"/>
</dbReference>
<dbReference type="PANTHER" id="PTHR11659">
    <property type="entry name" value="GLUTAMYL-TRNA GLN AMIDOTRANSFERASE SUBUNIT B MITOCHONDRIAL AND PROKARYOTIC PET112-RELATED"/>
    <property type="match status" value="1"/>
</dbReference>
<dbReference type="PANTHER" id="PTHR11659:SF0">
    <property type="entry name" value="GLUTAMYL-TRNA(GLN) AMIDOTRANSFERASE SUBUNIT B, MITOCHONDRIAL"/>
    <property type="match status" value="1"/>
</dbReference>
<dbReference type="Pfam" id="PF02934">
    <property type="entry name" value="GatB_N"/>
    <property type="match status" value="1"/>
</dbReference>
<dbReference type="Pfam" id="PF02637">
    <property type="entry name" value="GatB_Yqey"/>
    <property type="match status" value="1"/>
</dbReference>
<dbReference type="SMART" id="SM00845">
    <property type="entry name" value="GatB_Yqey"/>
    <property type="match status" value="1"/>
</dbReference>
<dbReference type="SUPFAM" id="SSF89095">
    <property type="entry name" value="GatB/YqeY motif"/>
    <property type="match status" value="1"/>
</dbReference>
<dbReference type="SUPFAM" id="SSF55931">
    <property type="entry name" value="Glutamine synthetase/guanido kinase"/>
    <property type="match status" value="1"/>
</dbReference>
<dbReference type="PROSITE" id="PS01234">
    <property type="entry name" value="GATB"/>
    <property type="match status" value="1"/>
</dbReference>